<keyword id="KW-0342">GTP-binding</keyword>
<keyword id="KW-0472">Membrane</keyword>
<keyword id="KW-0496">Mitochondrion</keyword>
<keyword id="KW-0999">Mitochondrion inner membrane</keyword>
<keyword id="KW-0547">Nucleotide-binding</keyword>
<keyword id="KW-0809">Transit peptide</keyword>
<keyword id="KW-0810">Translation regulation</keyword>
<gene>
    <name evidence="5" type="primary">mtg1</name>
</gene>
<comment type="function">
    <text evidence="2">Plays a role in the regulation of the mitochondrial ribosome assembly and of translational activity (By similarity). Displays mitochondrial GTPase activity (By similarity).</text>
</comment>
<comment type="subcellular location">
    <subcellularLocation>
        <location evidence="2">Mitochondrion inner membrane</location>
        <topology evidence="2">Peripheral membrane protein</topology>
        <orientation evidence="2">Matrix side</orientation>
    </subcellularLocation>
</comment>
<comment type="similarity">
    <text evidence="4">Belongs to the TRAFAC class YlqF/YawG GTPase family. MTG1 subfamily.</text>
</comment>
<feature type="transit peptide" description="Mitochondrion" evidence="2 3">
    <location>
        <begin position="1"/>
        <end status="unknown"/>
    </location>
</feature>
<feature type="chain" id="PRO_0000409873" description="Mitochondrial ribosome-associated GTPase 1">
    <location>
        <begin status="unknown"/>
        <end position="320"/>
    </location>
</feature>
<feature type="domain" description="CP-type G" evidence="4">
    <location>
        <begin position="37"/>
        <end position="209"/>
    </location>
</feature>
<feature type="binding site" evidence="1">
    <location>
        <begin position="81"/>
        <end position="84"/>
    </location>
    <ligand>
        <name>GTP</name>
        <dbReference type="ChEBI" id="CHEBI:37565"/>
    </ligand>
</feature>
<feature type="binding site" evidence="1">
    <location>
        <begin position="153"/>
        <end position="158"/>
    </location>
    <ligand>
        <name>GTP</name>
        <dbReference type="ChEBI" id="CHEBI:37565"/>
    </ligand>
</feature>
<feature type="binding site" evidence="1">
    <location>
        <position position="205"/>
    </location>
    <ligand>
        <name>GTP</name>
        <dbReference type="ChEBI" id="CHEBI:37565"/>
    </ligand>
</feature>
<proteinExistence type="evidence at transcript level"/>
<name>MTG1_ICTPU</name>
<organism>
    <name type="scientific">Ictalurus punctatus</name>
    <name type="common">Channel catfish</name>
    <name type="synonym">Silurus punctatus</name>
    <dbReference type="NCBI Taxonomy" id="7998"/>
    <lineage>
        <taxon>Eukaryota</taxon>
        <taxon>Metazoa</taxon>
        <taxon>Chordata</taxon>
        <taxon>Craniata</taxon>
        <taxon>Vertebrata</taxon>
        <taxon>Euteleostomi</taxon>
        <taxon>Actinopterygii</taxon>
        <taxon>Neopterygii</taxon>
        <taxon>Teleostei</taxon>
        <taxon>Ostariophysi</taxon>
        <taxon>Siluriformes</taxon>
        <taxon>Ictaluridae</taxon>
        <taxon>Ictalurus</taxon>
    </lineage>
</organism>
<evidence type="ECO:0000250" key="1">
    <source>
        <dbReference type="UniProtKB" id="O31743"/>
    </source>
</evidence>
<evidence type="ECO:0000250" key="2">
    <source>
        <dbReference type="UniProtKB" id="Q9BT17"/>
    </source>
</evidence>
<evidence type="ECO:0000255" key="3"/>
<evidence type="ECO:0000255" key="4">
    <source>
        <dbReference type="PROSITE-ProRule" id="PRU01058"/>
    </source>
</evidence>
<evidence type="ECO:0000312" key="5">
    <source>
        <dbReference type="EMBL" id="ADO28459.1"/>
    </source>
</evidence>
<accession>E3TDS3</accession>
<reference evidence="5" key="1">
    <citation type="journal article" date="2010" name="PLoS ONE">
        <title>Identification and characterization of full-length cDNAs in channel catfish (Ictalurus punctatus) and blue catfish (Ictalurus furcatus).</title>
        <authorList>
            <person name="Chen F."/>
            <person name="Lee Y."/>
            <person name="Jiang Y."/>
            <person name="Wang S."/>
            <person name="Peatman E."/>
            <person name="Abernathy J."/>
            <person name="Liu H."/>
            <person name="Liu S."/>
            <person name="Kucuktas H."/>
            <person name="Ke C."/>
            <person name="Liu Z."/>
        </authorList>
    </citation>
    <scope>NUCLEOTIDE SEQUENCE [MRNA]</scope>
</reference>
<dbReference type="EMBL" id="GU588503">
    <property type="protein sequence ID" value="ADO28459.1"/>
    <property type="molecule type" value="mRNA"/>
</dbReference>
<dbReference type="RefSeq" id="NP_001187294.1">
    <property type="nucleotide sequence ID" value="NM_001200365.1"/>
</dbReference>
<dbReference type="SMR" id="E3TDS3"/>
<dbReference type="STRING" id="7998.ENSIPUP00000026411"/>
<dbReference type="GeneID" id="100528095"/>
<dbReference type="KEGG" id="ipu:100528095"/>
<dbReference type="CTD" id="92170"/>
<dbReference type="OrthoDB" id="269151at2759"/>
<dbReference type="Proteomes" id="UP000221080">
    <property type="component" value="Chromosome 3"/>
</dbReference>
<dbReference type="GO" id="GO:0005743">
    <property type="term" value="C:mitochondrial inner membrane"/>
    <property type="evidence" value="ECO:0000250"/>
    <property type="project" value="UniProtKB"/>
</dbReference>
<dbReference type="GO" id="GO:0005759">
    <property type="term" value="C:mitochondrial matrix"/>
    <property type="evidence" value="ECO:0000250"/>
    <property type="project" value="UniProtKB"/>
</dbReference>
<dbReference type="GO" id="GO:0005761">
    <property type="term" value="C:mitochondrial ribosome"/>
    <property type="evidence" value="ECO:0000250"/>
    <property type="project" value="UniProtKB"/>
</dbReference>
<dbReference type="GO" id="GO:0005525">
    <property type="term" value="F:GTP binding"/>
    <property type="evidence" value="ECO:0007669"/>
    <property type="project" value="UniProtKB-KW"/>
</dbReference>
<dbReference type="GO" id="GO:0003924">
    <property type="term" value="F:GTPase activity"/>
    <property type="evidence" value="ECO:0007669"/>
    <property type="project" value="TreeGrafter"/>
</dbReference>
<dbReference type="GO" id="GO:0032543">
    <property type="term" value="P:mitochondrial translation"/>
    <property type="evidence" value="ECO:0007669"/>
    <property type="project" value="TreeGrafter"/>
</dbReference>
<dbReference type="GO" id="GO:0006417">
    <property type="term" value="P:regulation of translation"/>
    <property type="evidence" value="ECO:0007669"/>
    <property type="project" value="UniProtKB-KW"/>
</dbReference>
<dbReference type="CDD" id="cd01856">
    <property type="entry name" value="YlqF"/>
    <property type="match status" value="1"/>
</dbReference>
<dbReference type="FunFam" id="1.10.1580.10:FF:000004">
    <property type="entry name" value="Mitochondrial GTPase 1"/>
    <property type="match status" value="1"/>
</dbReference>
<dbReference type="FunFam" id="3.40.50.300:FF:000876">
    <property type="entry name" value="Mitochondrial GTPase 1"/>
    <property type="match status" value="1"/>
</dbReference>
<dbReference type="Gene3D" id="1.10.1580.10">
    <property type="match status" value="1"/>
</dbReference>
<dbReference type="Gene3D" id="3.40.50.300">
    <property type="entry name" value="P-loop containing nucleotide triphosphate hydrolases"/>
    <property type="match status" value="1"/>
</dbReference>
<dbReference type="InterPro" id="IPR030378">
    <property type="entry name" value="G_CP_dom"/>
</dbReference>
<dbReference type="InterPro" id="IPR006073">
    <property type="entry name" value="GTP-bd"/>
</dbReference>
<dbReference type="InterPro" id="IPR023179">
    <property type="entry name" value="GTP-bd_ortho_bundle_sf"/>
</dbReference>
<dbReference type="InterPro" id="IPR016478">
    <property type="entry name" value="GTPase_MTG1"/>
</dbReference>
<dbReference type="InterPro" id="IPR027417">
    <property type="entry name" value="P-loop_NTPase"/>
</dbReference>
<dbReference type="PANTHER" id="PTHR45782">
    <property type="entry name" value="MITOCHONDRIAL RIBOSOME-ASSOCIATED GTPASE 1"/>
    <property type="match status" value="1"/>
</dbReference>
<dbReference type="PANTHER" id="PTHR45782:SF4">
    <property type="entry name" value="MITOCHONDRIAL RIBOSOME-ASSOCIATED GTPASE 1"/>
    <property type="match status" value="1"/>
</dbReference>
<dbReference type="Pfam" id="PF01926">
    <property type="entry name" value="MMR_HSR1"/>
    <property type="match status" value="1"/>
</dbReference>
<dbReference type="PIRSF" id="PIRSF006230">
    <property type="entry name" value="MG442"/>
    <property type="match status" value="1"/>
</dbReference>
<dbReference type="PRINTS" id="PR00326">
    <property type="entry name" value="GTP1OBG"/>
</dbReference>
<dbReference type="SUPFAM" id="SSF52540">
    <property type="entry name" value="P-loop containing nucleoside triphosphate hydrolases"/>
    <property type="match status" value="1"/>
</dbReference>
<dbReference type="PROSITE" id="PS51721">
    <property type="entry name" value="G_CP"/>
    <property type="match status" value="1"/>
</dbReference>
<protein>
    <recommendedName>
        <fullName>Mitochondrial ribosome-associated GTPase 1</fullName>
    </recommendedName>
    <alternativeName>
        <fullName evidence="5">Mitochondrial GTPase 1</fullName>
    </alternativeName>
</protein>
<sequence length="320" mass="36016">MRISHTLLNASSKFRTVFDFGERQVAHWFPGHMAKGLKQMRASPRKVDCVIEIHDARIPFSGRNPLFQENLDVRPHLLILNKMDLADTSDKMSILKQLERDGVKNVLLTDCLKQRDTSVKKIIPLVTDLIENAPRFHREENRSYCLMVIGVPNVGKSSLINAIRRTNLKKGKASRVGGEPGITKAVLTKIQVCERPVIHLLDTPGVLPPKIENIETGMKLALCGTILDHLVGEDIIADYLLFSLNRPQRFGYVERYDLETPSDDIQHVLKCIAVKLGKTQRVKAITGVGDITVRMPNYTAAAYDFIRAFRKGELGKVMLD</sequence>